<protein>
    <recommendedName>
        <fullName evidence="2">Probable triacylglyceride transporter JTY_1446</fullName>
    </recommendedName>
    <alternativeName>
        <fullName>MFS-type drug efflux transporter P55</fullName>
    </alternativeName>
</protein>
<accession>C1AN55</accession>
<gene>
    <name type="ordered locus">JTY_1446</name>
</gene>
<keyword id="KW-0997">Cell inner membrane</keyword>
<keyword id="KW-1003">Cell membrane</keyword>
<keyword id="KW-0472">Membrane</keyword>
<keyword id="KW-0812">Transmembrane</keyword>
<keyword id="KW-1133">Transmembrane helix</keyword>
<keyword id="KW-0813">Transport</keyword>
<name>MFS55_MYCBT</name>
<evidence type="ECO:0000250" key="1"/>
<evidence type="ECO:0000250" key="2">
    <source>
        <dbReference type="UniProtKB" id="P9WJY3"/>
    </source>
</evidence>
<evidence type="ECO:0000255" key="3"/>
<evidence type="ECO:0000305" key="4"/>
<dbReference type="EMBL" id="AP010918">
    <property type="protein sequence ID" value="BAH25734.1"/>
    <property type="molecule type" value="Genomic_DNA"/>
</dbReference>
<dbReference type="RefSeq" id="WP_003407310.1">
    <property type="nucleotide sequence ID" value="NZ_CP014566.1"/>
</dbReference>
<dbReference type="SMR" id="C1AN55"/>
<dbReference type="KEGG" id="mbt:JTY_1446"/>
<dbReference type="HOGENOM" id="CLU_000960_2_5_11"/>
<dbReference type="GO" id="GO:0005886">
    <property type="term" value="C:plasma membrane"/>
    <property type="evidence" value="ECO:0007669"/>
    <property type="project" value="UniProtKB-SubCell"/>
</dbReference>
<dbReference type="GO" id="GO:0022857">
    <property type="term" value="F:transmembrane transporter activity"/>
    <property type="evidence" value="ECO:0007669"/>
    <property type="project" value="InterPro"/>
</dbReference>
<dbReference type="CDD" id="cd17321">
    <property type="entry name" value="MFS_MMR_MDR_like"/>
    <property type="match status" value="1"/>
</dbReference>
<dbReference type="FunFam" id="1.20.1720.10:FF:000020">
    <property type="entry name" value="Probable triacylglyceride transporter BCG_1471c"/>
    <property type="match status" value="1"/>
</dbReference>
<dbReference type="Gene3D" id="1.20.1250.20">
    <property type="entry name" value="MFS general substrate transporter like domains"/>
    <property type="match status" value="1"/>
</dbReference>
<dbReference type="Gene3D" id="1.20.1720.10">
    <property type="entry name" value="Multidrug resistance protein D"/>
    <property type="match status" value="1"/>
</dbReference>
<dbReference type="InterPro" id="IPR011701">
    <property type="entry name" value="MFS"/>
</dbReference>
<dbReference type="InterPro" id="IPR020846">
    <property type="entry name" value="MFS_dom"/>
</dbReference>
<dbReference type="InterPro" id="IPR036259">
    <property type="entry name" value="MFS_trans_sf"/>
</dbReference>
<dbReference type="InterPro" id="IPR005829">
    <property type="entry name" value="Sugar_transporter_CS"/>
</dbReference>
<dbReference type="PANTHER" id="PTHR23501">
    <property type="entry name" value="MAJOR FACILITATOR SUPERFAMILY"/>
    <property type="match status" value="1"/>
</dbReference>
<dbReference type="PANTHER" id="PTHR23501:SF191">
    <property type="entry name" value="VACUOLAR BASIC AMINO ACID TRANSPORTER 4"/>
    <property type="match status" value="1"/>
</dbReference>
<dbReference type="Pfam" id="PF07690">
    <property type="entry name" value="MFS_1"/>
    <property type="match status" value="1"/>
</dbReference>
<dbReference type="SUPFAM" id="SSF103473">
    <property type="entry name" value="MFS general substrate transporter"/>
    <property type="match status" value="1"/>
</dbReference>
<dbReference type="PROSITE" id="PS50850">
    <property type="entry name" value="MFS"/>
    <property type="match status" value="1"/>
</dbReference>
<proteinExistence type="inferred from homology"/>
<reference key="1">
    <citation type="journal article" date="2009" name="Vaccine">
        <title>Whole genome sequence analysis of Mycobacterium bovis bacillus Calmette-Guerin (BCG) Tokyo 172: a comparative study of BCG vaccine substrains.</title>
        <authorList>
            <person name="Seki M."/>
            <person name="Honda I."/>
            <person name="Fujita I."/>
            <person name="Yano I."/>
            <person name="Yamamoto S."/>
            <person name="Koyama A."/>
        </authorList>
    </citation>
    <scope>NUCLEOTIDE SEQUENCE [LARGE SCALE GENOMIC DNA]</scope>
    <source>
        <strain>BCG / Tokyo 172 / ATCC 35737 / TMC 1019</strain>
    </source>
</reference>
<organism>
    <name type="scientific">Mycobacterium bovis (strain BCG / Tokyo 172 / ATCC 35737 / TMC 1019)</name>
    <dbReference type="NCBI Taxonomy" id="561275"/>
    <lineage>
        <taxon>Bacteria</taxon>
        <taxon>Bacillati</taxon>
        <taxon>Actinomycetota</taxon>
        <taxon>Actinomycetes</taxon>
        <taxon>Mycobacteriales</taxon>
        <taxon>Mycobacteriaceae</taxon>
        <taxon>Mycobacterium</taxon>
        <taxon>Mycobacterium tuberculosis complex</taxon>
    </lineage>
</organism>
<sequence length="518" mass="54689">MRAGRRVAISAGSLAVLLGALDTYVVVTIMRDIMNSVGIPINQLHRITWIVTMYLLGYIAAMPLLGRASDRFGRKLMLQVSLAGFIIGSVVTALAGHFGDFHMLIAGRTIQGVASGALLPITLALGADLWSQRNRAGVLGGIGAAQELGSVLGPLYGIFIVWLLHDWRDVFWINVPLTAIAMVMIHFSLPSHDRSTEPERVDLVGGLLLALALGLAVIGLYNPNPDGKHVLPDYGAPLLVGALVAAVAFFGWERFARTRLIDPAGVHFRPFLSALGASVAAGAALMVTLVDVELFGQGVLQMDQAQAAGMLLWFLIALPIGAVTGGWIATRAGDRAVAFAGLLIAAYGYWLISHWPVDLLADRHNILGLFTVPAMHTDLVVAGLGLGLVIGPLSSATLRVVPSAQHGIASAAVVVARMTGMLIGVAALSAWGLYRFNQILAGLSAAIPPNASLLERAAAIGARYQQAFALMYGEIFTITAIVCVFGAVLGLLISGRKEHADEPEVQEQPTLAPQVEPL</sequence>
<comment type="function">
    <text evidence="2">In association with lipoprotein LprG probably transports triacylglycerides (TAG) across the inner cell membrane into the periplasm; TAG probably regulates lipid metabolism and growth regulation. May be an efflux transporter and involved in maintaining correct cell wall permeability. Probably required with LprG for normal surface localization of lipoarabinomannan (LAM).</text>
</comment>
<comment type="subcellular location">
    <subcellularLocation>
        <location evidence="4">Cell inner membrane</location>
        <topology evidence="1">Multi-pass membrane protein</topology>
    </subcellularLocation>
</comment>
<comment type="miscellaneous">
    <text evidence="4">Bacterial LAM blocks host cell phagosome-lysosome fusion and is one way in which Mycobacteria evade the host immune system.</text>
</comment>
<comment type="miscellaneous">
    <text evidence="4">Triacylglycerides accumulate in lipid droplets in the cytoplasm of M.tuberculosis stationary phase and dormant bacteria, and are used as an energy source during starvation.</text>
</comment>
<comment type="similarity">
    <text evidence="4">Belongs to the major facilitator superfamily.</text>
</comment>
<feature type="chain" id="PRO_0000391005" description="Probable triacylglyceride transporter JTY_1446">
    <location>
        <begin position="1"/>
        <end position="518"/>
    </location>
</feature>
<feature type="transmembrane region" description="Helical" evidence="3">
    <location>
        <begin position="7"/>
        <end position="27"/>
    </location>
</feature>
<feature type="transmembrane region" description="Helical" evidence="3">
    <location>
        <begin position="46"/>
        <end position="66"/>
    </location>
</feature>
<feature type="transmembrane region" description="Helical" evidence="3">
    <location>
        <begin position="76"/>
        <end position="96"/>
    </location>
</feature>
<feature type="transmembrane region" description="Helical" evidence="3">
    <location>
        <begin position="110"/>
        <end position="130"/>
    </location>
</feature>
<feature type="transmembrane region" description="Helical" evidence="3">
    <location>
        <begin position="144"/>
        <end position="164"/>
    </location>
</feature>
<feature type="transmembrane region" description="Helical" evidence="3">
    <location>
        <begin position="170"/>
        <end position="190"/>
    </location>
</feature>
<feature type="transmembrane region" description="Helical" evidence="3">
    <location>
        <begin position="201"/>
        <end position="221"/>
    </location>
</feature>
<feature type="transmembrane region" description="Helical" evidence="3">
    <location>
        <begin position="230"/>
        <end position="250"/>
    </location>
</feature>
<feature type="transmembrane region" description="Helical" evidence="3">
    <location>
        <begin position="270"/>
        <end position="290"/>
    </location>
</feature>
<feature type="transmembrane region" description="Helical" evidence="3">
    <location>
        <begin position="308"/>
        <end position="328"/>
    </location>
</feature>
<feature type="transmembrane region" description="Helical" evidence="3">
    <location>
        <begin position="337"/>
        <end position="357"/>
    </location>
</feature>
<feature type="transmembrane region" description="Helical" evidence="3">
    <location>
        <begin position="379"/>
        <end position="401"/>
    </location>
</feature>
<feature type="transmembrane region" description="Helical" evidence="3">
    <location>
        <begin position="408"/>
        <end position="428"/>
    </location>
</feature>
<feature type="transmembrane region" description="Helical" evidence="3">
    <location>
        <begin position="475"/>
        <end position="495"/>
    </location>
</feature>